<feature type="chain" id="PRO_0000105146" description="Glutamyl-tRNA(Gln) amidotransferase subunit A">
    <location>
        <begin position="1"/>
        <end position="493"/>
    </location>
</feature>
<feature type="active site" description="Charge relay system" evidence="1">
    <location>
        <position position="79"/>
    </location>
</feature>
<feature type="active site" description="Charge relay system" evidence="1">
    <location>
        <position position="159"/>
    </location>
</feature>
<feature type="active site" description="Acyl-ester intermediate" evidence="1">
    <location>
        <position position="183"/>
    </location>
</feature>
<accession>Q8FW67</accession>
<accession>G0KCX2</accession>
<keyword id="KW-0067">ATP-binding</keyword>
<keyword id="KW-0436">Ligase</keyword>
<keyword id="KW-0547">Nucleotide-binding</keyword>
<keyword id="KW-0648">Protein biosynthesis</keyword>
<gene>
    <name evidence="1" type="primary">gatA</name>
    <name type="ordered locus">BRA0594</name>
    <name type="ordered locus">BS1330_II0589</name>
</gene>
<evidence type="ECO:0000255" key="1">
    <source>
        <dbReference type="HAMAP-Rule" id="MF_00120"/>
    </source>
</evidence>
<dbReference type="EC" id="6.3.5.7" evidence="1"/>
<dbReference type="EMBL" id="AE014292">
    <property type="protein sequence ID" value="AAN33783.1"/>
    <property type="molecule type" value="Genomic_DNA"/>
</dbReference>
<dbReference type="EMBL" id="CP002998">
    <property type="protein sequence ID" value="AEM20060.1"/>
    <property type="molecule type" value="Genomic_DNA"/>
</dbReference>
<dbReference type="RefSeq" id="WP_006191997.1">
    <property type="nucleotide sequence ID" value="NZ_KN046805.1"/>
</dbReference>
<dbReference type="SMR" id="Q8FW67"/>
<dbReference type="GeneID" id="45053630"/>
<dbReference type="KEGG" id="bms:BRA0594"/>
<dbReference type="KEGG" id="bsi:BS1330_II0589"/>
<dbReference type="PATRIC" id="fig|204722.21.peg.546"/>
<dbReference type="HOGENOM" id="CLU_009600_0_3_5"/>
<dbReference type="PhylomeDB" id="Q8FW67"/>
<dbReference type="Proteomes" id="UP000007104">
    <property type="component" value="Chromosome II"/>
</dbReference>
<dbReference type="GO" id="GO:0030956">
    <property type="term" value="C:glutamyl-tRNA(Gln) amidotransferase complex"/>
    <property type="evidence" value="ECO:0007669"/>
    <property type="project" value="InterPro"/>
</dbReference>
<dbReference type="GO" id="GO:0005524">
    <property type="term" value="F:ATP binding"/>
    <property type="evidence" value="ECO:0007669"/>
    <property type="project" value="UniProtKB-KW"/>
</dbReference>
<dbReference type="GO" id="GO:0050567">
    <property type="term" value="F:glutaminyl-tRNA synthase (glutamine-hydrolyzing) activity"/>
    <property type="evidence" value="ECO:0007669"/>
    <property type="project" value="UniProtKB-UniRule"/>
</dbReference>
<dbReference type="GO" id="GO:0006412">
    <property type="term" value="P:translation"/>
    <property type="evidence" value="ECO:0007669"/>
    <property type="project" value="UniProtKB-UniRule"/>
</dbReference>
<dbReference type="Gene3D" id="3.90.1300.10">
    <property type="entry name" value="Amidase signature (AS) domain"/>
    <property type="match status" value="1"/>
</dbReference>
<dbReference type="HAMAP" id="MF_00120">
    <property type="entry name" value="GatA"/>
    <property type="match status" value="1"/>
</dbReference>
<dbReference type="InterPro" id="IPR000120">
    <property type="entry name" value="Amidase"/>
</dbReference>
<dbReference type="InterPro" id="IPR020556">
    <property type="entry name" value="Amidase_CS"/>
</dbReference>
<dbReference type="InterPro" id="IPR023631">
    <property type="entry name" value="Amidase_dom"/>
</dbReference>
<dbReference type="InterPro" id="IPR036928">
    <property type="entry name" value="AS_sf"/>
</dbReference>
<dbReference type="InterPro" id="IPR004412">
    <property type="entry name" value="GatA"/>
</dbReference>
<dbReference type="NCBIfam" id="TIGR00132">
    <property type="entry name" value="gatA"/>
    <property type="match status" value="1"/>
</dbReference>
<dbReference type="PANTHER" id="PTHR11895:SF151">
    <property type="entry name" value="GLUTAMYL-TRNA(GLN) AMIDOTRANSFERASE SUBUNIT A"/>
    <property type="match status" value="1"/>
</dbReference>
<dbReference type="PANTHER" id="PTHR11895">
    <property type="entry name" value="TRANSAMIDASE"/>
    <property type="match status" value="1"/>
</dbReference>
<dbReference type="Pfam" id="PF01425">
    <property type="entry name" value="Amidase"/>
    <property type="match status" value="1"/>
</dbReference>
<dbReference type="SUPFAM" id="SSF75304">
    <property type="entry name" value="Amidase signature (AS) enzymes"/>
    <property type="match status" value="1"/>
</dbReference>
<dbReference type="PROSITE" id="PS00571">
    <property type="entry name" value="AMIDASES"/>
    <property type="match status" value="1"/>
</dbReference>
<reference key="1">
    <citation type="journal article" date="2002" name="Proc. Natl. Acad. Sci. U.S.A.">
        <title>The Brucella suis genome reveals fundamental similarities between animal and plant pathogens and symbionts.</title>
        <authorList>
            <person name="Paulsen I.T."/>
            <person name="Seshadri R."/>
            <person name="Nelson K.E."/>
            <person name="Eisen J.A."/>
            <person name="Heidelberg J.F."/>
            <person name="Read T.D."/>
            <person name="Dodson R.J."/>
            <person name="Umayam L.A."/>
            <person name="Brinkac L.M."/>
            <person name="Beanan M.J."/>
            <person name="Daugherty S.C."/>
            <person name="DeBoy R.T."/>
            <person name="Durkin A.S."/>
            <person name="Kolonay J.F."/>
            <person name="Madupu R."/>
            <person name="Nelson W.C."/>
            <person name="Ayodeji B."/>
            <person name="Kraul M."/>
            <person name="Shetty J."/>
            <person name="Malek J.A."/>
            <person name="Van Aken S.E."/>
            <person name="Riedmuller S."/>
            <person name="Tettelin H."/>
            <person name="Gill S.R."/>
            <person name="White O."/>
            <person name="Salzberg S.L."/>
            <person name="Hoover D.L."/>
            <person name="Lindler L.E."/>
            <person name="Halling S.M."/>
            <person name="Boyle S.M."/>
            <person name="Fraser C.M."/>
        </authorList>
    </citation>
    <scope>NUCLEOTIDE SEQUENCE [LARGE SCALE GENOMIC DNA]</scope>
    <source>
        <strain>1330</strain>
    </source>
</reference>
<reference key="2">
    <citation type="journal article" date="2011" name="J. Bacteriol.">
        <title>Revised genome sequence of Brucella suis 1330.</title>
        <authorList>
            <person name="Tae H."/>
            <person name="Shallom S."/>
            <person name="Settlage R."/>
            <person name="Preston D."/>
            <person name="Adams L.G."/>
            <person name="Garner H.R."/>
        </authorList>
    </citation>
    <scope>NUCLEOTIDE SEQUENCE [LARGE SCALE GENOMIC DNA]</scope>
    <source>
        <strain>1330</strain>
    </source>
</reference>
<organism>
    <name type="scientific">Brucella suis biovar 1 (strain 1330)</name>
    <dbReference type="NCBI Taxonomy" id="204722"/>
    <lineage>
        <taxon>Bacteria</taxon>
        <taxon>Pseudomonadati</taxon>
        <taxon>Pseudomonadota</taxon>
        <taxon>Alphaproteobacteria</taxon>
        <taxon>Hyphomicrobiales</taxon>
        <taxon>Brucellaceae</taxon>
        <taxon>Brucella/Ochrobactrum group</taxon>
        <taxon>Brucella</taxon>
    </lineage>
</organism>
<comment type="function">
    <text evidence="1">Allows the formation of correctly charged Gln-tRNA(Gln) through the transamidation of misacylated Glu-tRNA(Gln) in organisms which lack glutaminyl-tRNA synthetase. The reaction takes place in the presence of glutamine and ATP through an activated gamma-phospho-Glu-tRNA(Gln).</text>
</comment>
<comment type="catalytic activity">
    <reaction evidence="1">
        <text>L-glutamyl-tRNA(Gln) + L-glutamine + ATP + H2O = L-glutaminyl-tRNA(Gln) + L-glutamate + ADP + phosphate + H(+)</text>
        <dbReference type="Rhea" id="RHEA:17521"/>
        <dbReference type="Rhea" id="RHEA-COMP:9681"/>
        <dbReference type="Rhea" id="RHEA-COMP:9684"/>
        <dbReference type="ChEBI" id="CHEBI:15377"/>
        <dbReference type="ChEBI" id="CHEBI:15378"/>
        <dbReference type="ChEBI" id="CHEBI:29985"/>
        <dbReference type="ChEBI" id="CHEBI:30616"/>
        <dbReference type="ChEBI" id="CHEBI:43474"/>
        <dbReference type="ChEBI" id="CHEBI:58359"/>
        <dbReference type="ChEBI" id="CHEBI:78520"/>
        <dbReference type="ChEBI" id="CHEBI:78521"/>
        <dbReference type="ChEBI" id="CHEBI:456216"/>
        <dbReference type="EC" id="6.3.5.7"/>
    </reaction>
</comment>
<comment type="subunit">
    <text evidence="1">Heterotrimer of A, B and C subunits.</text>
</comment>
<comment type="similarity">
    <text evidence="1">Belongs to the amidase family. GatA subfamily.</text>
</comment>
<sequence length="493" mass="52433">MSELTALTIAEARDKLKAKAITATELTDAYLSAIDAANDAINAYVAVTHDQARSMAKASDERIAKGEAGALEGIPLGVKDLFATKGVHTQACSHILDGFKPEYESTVTANLWADGAVMLGKLNMDEFAMGSSNETSYYGPVKNPWRAKGSNADLVPGGSSGGSAAAVAAHLCAGATATDTGGSIRQPAAFTGTVGIKPTYGRVSRWGTVAFASSLDQAGPIARDVRDAAILMKSMASLDLKDTTSVDLPVPDYEAALGRSVKGMKIGIPREYRVDGMPGEIEELWQKGIQYLKDAGAEIVDISLPHTKYALPAYYIVAPAEASSNLARYDGVRYGLRVPGKDIADMYEQTRAAGFGKEVKRRIMIGTYVLSAGYYDAYYLRAQKVRTLIKKDFEDVFAKGVDAILTPATPSAAFGLADEVLANDPVKMYLNDIFTVTVNMAGLPGIAVPGGLNGQGLPLGLQLIGRPFEEETLFQAAHVIEQAAGRFTPAKWW</sequence>
<proteinExistence type="inferred from homology"/>
<protein>
    <recommendedName>
        <fullName evidence="1">Glutamyl-tRNA(Gln) amidotransferase subunit A</fullName>
        <shortName evidence="1">Glu-ADT subunit A</shortName>
        <ecNumber evidence="1">6.3.5.7</ecNumber>
    </recommendedName>
</protein>
<name>GATA_BRUSU</name>